<accession>B5RF80</accession>
<sequence>MSEMTPREIVSELNKHIIGQDNAKRSVAIALRNRWRRMQLDEELRHEVTPKNILMIGPTGVGKTEIARRLAKLANAPFIKVEATKFTEVGYVGKEVDSIIRDLTDAAVKMVRVQAIEKNRYRAEELAEERILDVLIPPAKNNWGQAEQQQEPSAARQTFRKKLREGQLDDKEIEINLAAAPMGVEIMAPPGMEEMTSQLQSMFQNLGGQKQKPRKLKIKDAMKLLVEEEAAKLVNPEELKQDAIDAVEQHGIVFIDEIDKICKRGETSGPDVSREGVQRDLLPLVEGCTVSTKHGMVKTDHILFIASGAFQVAKPSDLIPELQGRLPIRVELQALTTSDFERILTEPNASVTVQYKALMATEGVNIEFTDSGIKRIAEAAWQVNETTENIGARRLHTVLERLMEEISYNASDLHGQNITIDAEYVSKHLDALVADEDLSRFIL</sequence>
<evidence type="ECO:0000255" key="1">
    <source>
        <dbReference type="HAMAP-Rule" id="MF_00249"/>
    </source>
</evidence>
<gene>
    <name evidence="1" type="primary">hslU</name>
    <name type="ordered locus">SG3329</name>
</gene>
<organism>
    <name type="scientific">Salmonella gallinarum (strain 287/91 / NCTC 13346)</name>
    <dbReference type="NCBI Taxonomy" id="550538"/>
    <lineage>
        <taxon>Bacteria</taxon>
        <taxon>Pseudomonadati</taxon>
        <taxon>Pseudomonadota</taxon>
        <taxon>Gammaproteobacteria</taxon>
        <taxon>Enterobacterales</taxon>
        <taxon>Enterobacteriaceae</taxon>
        <taxon>Salmonella</taxon>
    </lineage>
</organism>
<proteinExistence type="inferred from homology"/>
<keyword id="KW-0067">ATP-binding</keyword>
<keyword id="KW-0143">Chaperone</keyword>
<keyword id="KW-0963">Cytoplasm</keyword>
<keyword id="KW-0547">Nucleotide-binding</keyword>
<keyword id="KW-0346">Stress response</keyword>
<comment type="function">
    <text evidence="1">ATPase subunit of a proteasome-like degradation complex; this subunit has chaperone activity. The binding of ATP and its subsequent hydrolysis by HslU are essential for unfolding of protein substrates subsequently hydrolyzed by HslV. HslU recognizes the N-terminal part of its protein substrates and unfolds these before they are guided to HslV for hydrolysis.</text>
</comment>
<comment type="subunit">
    <text evidence="1">A double ring-shaped homohexamer of HslV is capped on each side by a ring-shaped HslU homohexamer. The assembly of the HslU/HslV complex is dependent on binding of ATP.</text>
</comment>
<comment type="subcellular location">
    <subcellularLocation>
        <location evidence="1">Cytoplasm</location>
    </subcellularLocation>
</comment>
<comment type="induction">
    <text evidence="1">By heat shock.</text>
</comment>
<comment type="similarity">
    <text evidence="1">Belongs to the ClpX chaperone family. HslU subfamily.</text>
</comment>
<feature type="chain" id="PRO_1000100971" description="ATP-dependent protease ATPase subunit HslU">
    <location>
        <begin position="1"/>
        <end position="443"/>
    </location>
</feature>
<feature type="binding site" evidence="1">
    <location>
        <position position="18"/>
    </location>
    <ligand>
        <name>ATP</name>
        <dbReference type="ChEBI" id="CHEBI:30616"/>
    </ligand>
</feature>
<feature type="binding site" evidence="1">
    <location>
        <begin position="60"/>
        <end position="65"/>
    </location>
    <ligand>
        <name>ATP</name>
        <dbReference type="ChEBI" id="CHEBI:30616"/>
    </ligand>
</feature>
<feature type="binding site" evidence="1">
    <location>
        <position position="256"/>
    </location>
    <ligand>
        <name>ATP</name>
        <dbReference type="ChEBI" id="CHEBI:30616"/>
    </ligand>
</feature>
<feature type="binding site" evidence="1">
    <location>
        <position position="321"/>
    </location>
    <ligand>
        <name>ATP</name>
        <dbReference type="ChEBI" id="CHEBI:30616"/>
    </ligand>
</feature>
<feature type="binding site" evidence="1">
    <location>
        <position position="393"/>
    </location>
    <ligand>
        <name>ATP</name>
        <dbReference type="ChEBI" id="CHEBI:30616"/>
    </ligand>
</feature>
<name>HSLU_SALG2</name>
<reference key="1">
    <citation type="journal article" date="2008" name="Genome Res.">
        <title>Comparative genome analysis of Salmonella enteritidis PT4 and Salmonella gallinarum 287/91 provides insights into evolutionary and host adaptation pathways.</title>
        <authorList>
            <person name="Thomson N.R."/>
            <person name="Clayton D.J."/>
            <person name="Windhorst D."/>
            <person name="Vernikos G."/>
            <person name="Davidson S."/>
            <person name="Churcher C."/>
            <person name="Quail M.A."/>
            <person name="Stevens M."/>
            <person name="Jones M.A."/>
            <person name="Watson M."/>
            <person name="Barron A."/>
            <person name="Layton A."/>
            <person name="Pickard D."/>
            <person name="Kingsley R.A."/>
            <person name="Bignell A."/>
            <person name="Clark L."/>
            <person name="Harris B."/>
            <person name="Ormond D."/>
            <person name="Abdellah Z."/>
            <person name="Brooks K."/>
            <person name="Cherevach I."/>
            <person name="Chillingworth T."/>
            <person name="Woodward J."/>
            <person name="Norberczak H."/>
            <person name="Lord A."/>
            <person name="Arrowsmith C."/>
            <person name="Jagels K."/>
            <person name="Moule S."/>
            <person name="Mungall K."/>
            <person name="Saunders M."/>
            <person name="Whitehead S."/>
            <person name="Chabalgoity J.A."/>
            <person name="Maskell D."/>
            <person name="Humphreys T."/>
            <person name="Roberts M."/>
            <person name="Barrow P.A."/>
            <person name="Dougan G."/>
            <person name="Parkhill J."/>
        </authorList>
    </citation>
    <scope>NUCLEOTIDE SEQUENCE [LARGE SCALE GENOMIC DNA]</scope>
    <source>
        <strain>287/91 / NCTC 13346</strain>
    </source>
</reference>
<dbReference type="EMBL" id="AM933173">
    <property type="protein sequence ID" value="CAR39123.1"/>
    <property type="molecule type" value="Genomic_DNA"/>
</dbReference>
<dbReference type="RefSeq" id="WP_001293360.1">
    <property type="nucleotide sequence ID" value="NC_011274.1"/>
</dbReference>
<dbReference type="SMR" id="B5RF80"/>
<dbReference type="KEGG" id="seg:SG3329"/>
<dbReference type="HOGENOM" id="CLU_033123_0_0_6"/>
<dbReference type="Proteomes" id="UP000008321">
    <property type="component" value="Chromosome"/>
</dbReference>
<dbReference type="GO" id="GO:0009376">
    <property type="term" value="C:HslUV protease complex"/>
    <property type="evidence" value="ECO:0007669"/>
    <property type="project" value="UniProtKB-UniRule"/>
</dbReference>
<dbReference type="GO" id="GO:0005524">
    <property type="term" value="F:ATP binding"/>
    <property type="evidence" value="ECO:0007669"/>
    <property type="project" value="UniProtKB-UniRule"/>
</dbReference>
<dbReference type="GO" id="GO:0016887">
    <property type="term" value="F:ATP hydrolysis activity"/>
    <property type="evidence" value="ECO:0007669"/>
    <property type="project" value="InterPro"/>
</dbReference>
<dbReference type="GO" id="GO:0008233">
    <property type="term" value="F:peptidase activity"/>
    <property type="evidence" value="ECO:0007669"/>
    <property type="project" value="InterPro"/>
</dbReference>
<dbReference type="GO" id="GO:0036402">
    <property type="term" value="F:proteasome-activating activity"/>
    <property type="evidence" value="ECO:0007669"/>
    <property type="project" value="UniProtKB-UniRule"/>
</dbReference>
<dbReference type="GO" id="GO:0043335">
    <property type="term" value="P:protein unfolding"/>
    <property type="evidence" value="ECO:0007669"/>
    <property type="project" value="UniProtKB-UniRule"/>
</dbReference>
<dbReference type="GO" id="GO:0051603">
    <property type="term" value="P:proteolysis involved in protein catabolic process"/>
    <property type="evidence" value="ECO:0007669"/>
    <property type="project" value="TreeGrafter"/>
</dbReference>
<dbReference type="CDD" id="cd19498">
    <property type="entry name" value="RecA-like_HslU"/>
    <property type="match status" value="1"/>
</dbReference>
<dbReference type="FunFam" id="1.10.8.10:FF:000012">
    <property type="entry name" value="ATP-dependent protease ATPase subunit HslU"/>
    <property type="match status" value="1"/>
</dbReference>
<dbReference type="FunFam" id="1.10.8.10:FF:000028">
    <property type="entry name" value="ATP-dependent protease ATPase subunit HslU"/>
    <property type="match status" value="1"/>
</dbReference>
<dbReference type="FunFam" id="1.10.8.60:FF:000027">
    <property type="entry name" value="ATP-dependent protease ATPase subunit HslU"/>
    <property type="match status" value="1"/>
</dbReference>
<dbReference type="FunFam" id="3.40.50.300:FF:000213">
    <property type="entry name" value="ATP-dependent protease ATPase subunit HslU"/>
    <property type="match status" value="1"/>
</dbReference>
<dbReference type="FunFam" id="3.40.50.300:FF:000220">
    <property type="entry name" value="ATP-dependent protease ATPase subunit HslU"/>
    <property type="match status" value="1"/>
</dbReference>
<dbReference type="Gene3D" id="1.10.8.60">
    <property type="match status" value="1"/>
</dbReference>
<dbReference type="Gene3D" id="1.10.8.10">
    <property type="entry name" value="DNA helicase RuvA subunit, C-terminal domain"/>
    <property type="match status" value="2"/>
</dbReference>
<dbReference type="Gene3D" id="3.40.50.300">
    <property type="entry name" value="P-loop containing nucleotide triphosphate hydrolases"/>
    <property type="match status" value="1"/>
</dbReference>
<dbReference type="HAMAP" id="MF_00249">
    <property type="entry name" value="HslU"/>
    <property type="match status" value="1"/>
</dbReference>
<dbReference type="InterPro" id="IPR003593">
    <property type="entry name" value="AAA+_ATPase"/>
</dbReference>
<dbReference type="InterPro" id="IPR050052">
    <property type="entry name" value="ATP-dep_Clp_protease_ClpX"/>
</dbReference>
<dbReference type="InterPro" id="IPR003959">
    <property type="entry name" value="ATPase_AAA_core"/>
</dbReference>
<dbReference type="InterPro" id="IPR019489">
    <property type="entry name" value="Clp_ATPase_C"/>
</dbReference>
<dbReference type="InterPro" id="IPR004491">
    <property type="entry name" value="HslU"/>
</dbReference>
<dbReference type="InterPro" id="IPR027417">
    <property type="entry name" value="P-loop_NTPase"/>
</dbReference>
<dbReference type="NCBIfam" id="TIGR00390">
    <property type="entry name" value="hslU"/>
    <property type="match status" value="1"/>
</dbReference>
<dbReference type="NCBIfam" id="NF003544">
    <property type="entry name" value="PRK05201.1"/>
    <property type="match status" value="1"/>
</dbReference>
<dbReference type="PANTHER" id="PTHR48102">
    <property type="entry name" value="ATP-DEPENDENT CLP PROTEASE ATP-BINDING SUBUNIT CLPX-LIKE, MITOCHONDRIAL-RELATED"/>
    <property type="match status" value="1"/>
</dbReference>
<dbReference type="PANTHER" id="PTHR48102:SF3">
    <property type="entry name" value="ATP-DEPENDENT PROTEASE ATPASE SUBUNIT HSLU"/>
    <property type="match status" value="1"/>
</dbReference>
<dbReference type="Pfam" id="PF00004">
    <property type="entry name" value="AAA"/>
    <property type="match status" value="1"/>
</dbReference>
<dbReference type="Pfam" id="PF07724">
    <property type="entry name" value="AAA_2"/>
    <property type="match status" value="1"/>
</dbReference>
<dbReference type="SMART" id="SM00382">
    <property type="entry name" value="AAA"/>
    <property type="match status" value="1"/>
</dbReference>
<dbReference type="SMART" id="SM01086">
    <property type="entry name" value="ClpB_D2-small"/>
    <property type="match status" value="1"/>
</dbReference>
<dbReference type="SUPFAM" id="SSF52540">
    <property type="entry name" value="P-loop containing nucleoside triphosphate hydrolases"/>
    <property type="match status" value="1"/>
</dbReference>
<protein>
    <recommendedName>
        <fullName evidence="1">ATP-dependent protease ATPase subunit HslU</fullName>
    </recommendedName>
    <alternativeName>
        <fullName evidence="1">Heat shock protein HslU</fullName>
    </alternativeName>
    <alternativeName>
        <fullName evidence="1">Unfoldase HslU</fullName>
    </alternativeName>
</protein>